<gene>
    <name evidence="1" type="primary">efp</name>
    <name type="ordered locus">xcc-b100_1906</name>
</gene>
<reference key="1">
    <citation type="journal article" date="2008" name="J. Biotechnol.">
        <title>The genome of Xanthomonas campestris pv. campestris B100 and its use for the reconstruction of metabolic pathways involved in xanthan biosynthesis.</title>
        <authorList>
            <person name="Vorhoelter F.-J."/>
            <person name="Schneiker S."/>
            <person name="Goesmann A."/>
            <person name="Krause L."/>
            <person name="Bekel T."/>
            <person name="Kaiser O."/>
            <person name="Linke B."/>
            <person name="Patschkowski T."/>
            <person name="Rueckert C."/>
            <person name="Schmid J."/>
            <person name="Sidhu V.K."/>
            <person name="Sieber V."/>
            <person name="Tauch A."/>
            <person name="Watt S.A."/>
            <person name="Weisshaar B."/>
            <person name="Becker A."/>
            <person name="Niehaus K."/>
            <person name="Puehler A."/>
        </authorList>
    </citation>
    <scope>NUCLEOTIDE SEQUENCE [LARGE SCALE GENOMIC DNA]</scope>
    <source>
        <strain>B100</strain>
    </source>
</reference>
<name>EFP_XANCB</name>
<proteinExistence type="inferred from homology"/>
<sequence>MATVGMNDVKNGMKILVNNEPAVITETEYVKPGKGQAFTRMKYRFIKSGRVVEMTMKATDDVEVADVVDTDMRYLYTDGEYWHFMDPESFEQVQADKAGMGGAEKWLKGEEDCIVTLWNGAPIWVQPPNFVELKITETDPGVRGDTSGGGGKPATLETGAVVRVPLFVNQDEVIKVDTRSGEYSARVK</sequence>
<dbReference type="EMBL" id="AM920689">
    <property type="protein sequence ID" value="CAP51259.1"/>
    <property type="molecule type" value="Genomic_DNA"/>
</dbReference>
<dbReference type="SMR" id="B0RS24"/>
<dbReference type="KEGG" id="xca:xcc-b100_1906"/>
<dbReference type="HOGENOM" id="CLU_074944_0_0_6"/>
<dbReference type="UniPathway" id="UPA00345"/>
<dbReference type="Proteomes" id="UP000001188">
    <property type="component" value="Chromosome"/>
</dbReference>
<dbReference type="GO" id="GO:0005737">
    <property type="term" value="C:cytoplasm"/>
    <property type="evidence" value="ECO:0007669"/>
    <property type="project" value="UniProtKB-SubCell"/>
</dbReference>
<dbReference type="GO" id="GO:0003746">
    <property type="term" value="F:translation elongation factor activity"/>
    <property type="evidence" value="ECO:0007669"/>
    <property type="project" value="UniProtKB-UniRule"/>
</dbReference>
<dbReference type="GO" id="GO:0043043">
    <property type="term" value="P:peptide biosynthetic process"/>
    <property type="evidence" value="ECO:0007669"/>
    <property type="project" value="InterPro"/>
</dbReference>
<dbReference type="CDD" id="cd04470">
    <property type="entry name" value="S1_EF-P_repeat_1"/>
    <property type="match status" value="1"/>
</dbReference>
<dbReference type="CDD" id="cd05794">
    <property type="entry name" value="S1_EF-P_repeat_2"/>
    <property type="match status" value="1"/>
</dbReference>
<dbReference type="FunFam" id="2.30.30.30:FF:000039">
    <property type="entry name" value="Elongation factor P"/>
    <property type="match status" value="1"/>
</dbReference>
<dbReference type="FunFam" id="2.40.50.140:FF:000004">
    <property type="entry name" value="Elongation factor P"/>
    <property type="match status" value="1"/>
</dbReference>
<dbReference type="FunFam" id="2.40.50.140:FF:000009">
    <property type="entry name" value="Elongation factor P"/>
    <property type="match status" value="1"/>
</dbReference>
<dbReference type="Gene3D" id="2.30.30.30">
    <property type="match status" value="1"/>
</dbReference>
<dbReference type="Gene3D" id="2.40.50.140">
    <property type="entry name" value="Nucleic acid-binding proteins"/>
    <property type="match status" value="2"/>
</dbReference>
<dbReference type="HAMAP" id="MF_00141">
    <property type="entry name" value="EF_P"/>
    <property type="match status" value="1"/>
</dbReference>
<dbReference type="InterPro" id="IPR015365">
    <property type="entry name" value="Elong-fact-P_C"/>
</dbReference>
<dbReference type="InterPro" id="IPR012340">
    <property type="entry name" value="NA-bd_OB-fold"/>
</dbReference>
<dbReference type="InterPro" id="IPR014722">
    <property type="entry name" value="Rib_uL2_dom2"/>
</dbReference>
<dbReference type="InterPro" id="IPR020599">
    <property type="entry name" value="Transl_elong_fac_P/YeiP"/>
</dbReference>
<dbReference type="InterPro" id="IPR013185">
    <property type="entry name" value="Transl_elong_KOW-like"/>
</dbReference>
<dbReference type="InterPro" id="IPR001059">
    <property type="entry name" value="Transl_elong_P/YeiP_cen"/>
</dbReference>
<dbReference type="InterPro" id="IPR013852">
    <property type="entry name" value="Transl_elong_P/YeiP_CS"/>
</dbReference>
<dbReference type="InterPro" id="IPR011768">
    <property type="entry name" value="Transl_elongation_fac_P"/>
</dbReference>
<dbReference type="InterPro" id="IPR008991">
    <property type="entry name" value="Translation_prot_SH3-like_sf"/>
</dbReference>
<dbReference type="NCBIfam" id="TIGR00038">
    <property type="entry name" value="efp"/>
    <property type="match status" value="1"/>
</dbReference>
<dbReference type="NCBIfam" id="NF001810">
    <property type="entry name" value="PRK00529.1"/>
    <property type="match status" value="1"/>
</dbReference>
<dbReference type="PANTHER" id="PTHR30053">
    <property type="entry name" value="ELONGATION FACTOR P"/>
    <property type="match status" value="1"/>
</dbReference>
<dbReference type="PANTHER" id="PTHR30053:SF12">
    <property type="entry name" value="ELONGATION FACTOR P (EF-P) FAMILY PROTEIN"/>
    <property type="match status" value="1"/>
</dbReference>
<dbReference type="Pfam" id="PF01132">
    <property type="entry name" value="EFP"/>
    <property type="match status" value="1"/>
</dbReference>
<dbReference type="Pfam" id="PF08207">
    <property type="entry name" value="EFP_N"/>
    <property type="match status" value="1"/>
</dbReference>
<dbReference type="Pfam" id="PF09285">
    <property type="entry name" value="Elong-fact-P_C"/>
    <property type="match status" value="1"/>
</dbReference>
<dbReference type="PIRSF" id="PIRSF005901">
    <property type="entry name" value="EF-P"/>
    <property type="match status" value="1"/>
</dbReference>
<dbReference type="SMART" id="SM01185">
    <property type="entry name" value="EFP"/>
    <property type="match status" value="1"/>
</dbReference>
<dbReference type="SMART" id="SM00841">
    <property type="entry name" value="Elong-fact-P_C"/>
    <property type="match status" value="1"/>
</dbReference>
<dbReference type="SUPFAM" id="SSF50249">
    <property type="entry name" value="Nucleic acid-binding proteins"/>
    <property type="match status" value="2"/>
</dbReference>
<dbReference type="SUPFAM" id="SSF50104">
    <property type="entry name" value="Translation proteins SH3-like domain"/>
    <property type="match status" value="1"/>
</dbReference>
<dbReference type="PROSITE" id="PS01275">
    <property type="entry name" value="EFP"/>
    <property type="match status" value="1"/>
</dbReference>
<comment type="function">
    <text evidence="1">Involved in peptide bond synthesis. Alleviates ribosome stalling that occurs when 3 or more consecutive Pro residues or the sequence PPG is present in a protein, possibly by augmenting the peptidyl transferase activity of the ribosome. Modification of Lys-34 is required for alleviation.</text>
</comment>
<comment type="pathway">
    <text evidence="1">Protein biosynthesis; polypeptide chain elongation.</text>
</comment>
<comment type="subcellular location">
    <subcellularLocation>
        <location evidence="1">Cytoplasm</location>
    </subcellularLocation>
</comment>
<comment type="PTM">
    <text evidence="1">May be beta-lysylated on the epsilon-amino group of Lys-34 by the combined action of EpmA and EpmB, and then hydroxylated on the C5 position of the same residue by EpmC (if this protein is present). Lysylation is critical for the stimulatory effect of EF-P on peptide-bond formation. The lysylation moiety may extend toward the peptidyltransferase center and stabilize the terminal 3-CCA end of the tRNA. Hydroxylation of the C5 position on Lys-34 may allow additional potential stabilizing hydrogen-bond interactions with the P-tRNA.</text>
</comment>
<comment type="similarity">
    <text evidence="1">Belongs to the elongation factor P family.</text>
</comment>
<organism>
    <name type="scientific">Xanthomonas campestris pv. campestris (strain B100)</name>
    <dbReference type="NCBI Taxonomy" id="509169"/>
    <lineage>
        <taxon>Bacteria</taxon>
        <taxon>Pseudomonadati</taxon>
        <taxon>Pseudomonadota</taxon>
        <taxon>Gammaproteobacteria</taxon>
        <taxon>Lysobacterales</taxon>
        <taxon>Lysobacteraceae</taxon>
        <taxon>Xanthomonas</taxon>
    </lineage>
</organism>
<feature type="chain" id="PRO_1000096224" description="Elongation factor P">
    <location>
        <begin position="1"/>
        <end position="188"/>
    </location>
</feature>
<feature type="modified residue" description="N6-(3,6-diaminohexanoyl)-5-hydroxylysine" evidence="1">
    <location>
        <position position="34"/>
    </location>
</feature>
<protein>
    <recommendedName>
        <fullName evidence="1">Elongation factor P</fullName>
        <shortName evidence="1">EF-P</shortName>
    </recommendedName>
</protein>
<evidence type="ECO:0000255" key="1">
    <source>
        <dbReference type="HAMAP-Rule" id="MF_00141"/>
    </source>
</evidence>
<accession>B0RS24</accession>
<keyword id="KW-0963">Cytoplasm</keyword>
<keyword id="KW-0251">Elongation factor</keyword>
<keyword id="KW-0379">Hydroxylation</keyword>
<keyword id="KW-0648">Protein biosynthesis</keyword>